<name>YCGR1_DECAR</name>
<gene>
    <name evidence="1" type="primary">ycgR1</name>
    <name type="ordered locus">Daro_0777</name>
</gene>
<comment type="function">
    <text evidence="1">Acts as a flagellar brake, regulating swimming and swarming in a bis-(3'-5') cyclic diguanylic acid (c-di-GMP)-dependent manner. Binds 1 c-di-GMP dimer per subunit. Increasing levels of c-di-GMP lead to decreased motility.</text>
</comment>
<comment type="subunit">
    <text evidence="1">Monomer. Interacts with the flagellar basal bodies.</text>
</comment>
<comment type="subcellular location">
    <subcellularLocation>
        <location evidence="1">Bacterial flagellum basal body</location>
    </subcellularLocation>
</comment>
<comment type="similarity">
    <text evidence="1">Belongs to the YcgR family.</text>
</comment>
<accession>Q47HZ8</accession>
<dbReference type="EMBL" id="CP000089">
    <property type="protein sequence ID" value="AAZ45533.1"/>
    <property type="molecule type" value="Genomic_DNA"/>
</dbReference>
<dbReference type="SMR" id="Q47HZ8"/>
<dbReference type="STRING" id="159087.Daro_0777"/>
<dbReference type="KEGG" id="dar:Daro_0777"/>
<dbReference type="eggNOG" id="COG5581">
    <property type="taxonomic scope" value="Bacteria"/>
</dbReference>
<dbReference type="HOGENOM" id="CLU_086025_0_0_4"/>
<dbReference type="OrthoDB" id="5572581at2"/>
<dbReference type="GO" id="GO:0009425">
    <property type="term" value="C:bacterial-type flagellum basal body"/>
    <property type="evidence" value="ECO:0007669"/>
    <property type="project" value="UniProtKB-SubCell"/>
</dbReference>
<dbReference type="GO" id="GO:0035438">
    <property type="term" value="F:cyclic-di-GMP binding"/>
    <property type="evidence" value="ECO:0007669"/>
    <property type="project" value="UniProtKB-UniRule"/>
</dbReference>
<dbReference type="GO" id="GO:0071973">
    <property type="term" value="P:bacterial-type flagellum-dependent cell motility"/>
    <property type="evidence" value="ECO:0007669"/>
    <property type="project" value="UniProtKB-UniRule"/>
</dbReference>
<dbReference type="GO" id="GO:0071945">
    <property type="term" value="P:regulation of bacterial-type flagellum-dependent cell motility by regulation of motor speed"/>
    <property type="evidence" value="ECO:0007669"/>
    <property type="project" value="UniProtKB-UniRule"/>
</dbReference>
<dbReference type="Gene3D" id="2.30.110.10">
    <property type="entry name" value="Electron Transport, Fmn-binding Protein, Chain A"/>
    <property type="match status" value="1"/>
</dbReference>
<dbReference type="Gene3D" id="2.40.10.220">
    <property type="entry name" value="predicted glycosyltransferase like domains"/>
    <property type="match status" value="1"/>
</dbReference>
<dbReference type="HAMAP" id="MF_01457">
    <property type="entry name" value="YcgR"/>
    <property type="match status" value="1"/>
</dbReference>
<dbReference type="InterPro" id="IPR009875">
    <property type="entry name" value="PilZ_domain"/>
</dbReference>
<dbReference type="InterPro" id="IPR012349">
    <property type="entry name" value="Split_barrel_FMN-bd"/>
</dbReference>
<dbReference type="InterPro" id="IPR023787">
    <property type="entry name" value="T3SS_YcgR"/>
</dbReference>
<dbReference type="InterPro" id="IPR009926">
    <property type="entry name" value="T3SS_YcgR_PilZN"/>
</dbReference>
<dbReference type="Pfam" id="PF07238">
    <property type="entry name" value="PilZ"/>
    <property type="match status" value="1"/>
</dbReference>
<dbReference type="Pfam" id="PF07317">
    <property type="entry name" value="PilZN"/>
    <property type="match status" value="1"/>
</dbReference>
<keyword id="KW-0975">Bacterial flagellum</keyword>
<keyword id="KW-0973">c-di-GMP</keyword>
<keyword id="KW-0547">Nucleotide-binding</keyword>
<protein>
    <recommendedName>
        <fullName evidence="1">Flagellar brake protein YcgR 1</fullName>
    </recommendedName>
    <alternativeName>
        <fullName evidence="1">Cyclic di-GMP binding protein YcgR 1</fullName>
    </alternativeName>
</protein>
<evidence type="ECO:0000255" key="1">
    <source>
        <dbReference type="HAMAP-Rule" id="MF_01457"/>
    </source>
</evidence>
<feature type="chain" id="PRO_0000395271" description="Flagellar brake protein YcgR 1">
    <location>
        <begin position="1"/>
        <end position="264"/>
    </location>
</feature>
<feature type="domain" description="PilZ" evidence="1">
    <location>
        <begin position="132"/>
        <end position="249"/>
    </location>
</feature>
<organism>
    <name type="scientific">Dechloromonas aromatica (strain RCB)</name>
    <dbReference type="NCBI Taxonomy" id="159087"/>
    <lineage>
        <taxon>Bacteria</taxon>
        <taxon>Pseudomonadati</taxon>
        <taxon>Pseudomonadota</taxon>
        <taxon>Betaproteobacteria</taxon>
        <taxon>Rhodocyclales</taxon>
        <taxon>Azonexaceae</taxon>
        <taxon>Dechloromonas</taxon>
    </lineage>
</organism>
<sequence length="264" mass="29739">MSSTQEDQPNPDFEIDHPEAYSQYFLTAPREISFYLNLLVKRGSLLTAHIDDGKAFFLTTMIAVDDEKQAIFLDSAQADELNTAAKNAHRITLTAKLDRVKIQLRLPPLRHQLVDGQKMLVAAFPQAILRIQRREFFRLESSSAHPILCRIAMEAPEGTLKTFEWNVADISGGGLSLNAPTSLINDCQRDALFKNSRLDIPGEGVLLVNLRVRKTSEFSAENGQHYLRVGCEFVELPGSRLAMIERYIARIERERKARDSGLAN</sequence>
<reference key="1">
    <citation type="journal article" date="2009" name="BMC Genomics">
        <title>Metabolic analysis of the soil microbe Dechloromonas aromatica str. RCB: indications of a surprisingly complex life-style and cryptic anaerobic pathways for aromatic degradation.</title>
        <authorList>
            <person name="Salinero K.K."/>
            <person name="Keller K."/>
            <person name="Feil W.S."/>
            <person name="Feil H."/>
            <person name="Trong S."/>
            <person name="Di Bartolo G."/>
            <person name="Lapidus A."/>
        </authorList>
    </citation>
    <scope>NUCLEOTIDE SEQUENCE [LARGE SCALE GENOMIC DNA]</scope>
    <source>
        <strain>RCB</strain>
    </source>
</reference>
<proteinExistence type="inferred from homology"/>